<feature type="chain" id="PRO_0000305872" description="Bifunctional protein FolD">
    <location>
        <begin position="1"/>
        <end position="295"/>
    </location>
</feature>
<feature type="binding site" evidence="1">
    <location>
        <begin position="166"/>
        <end position="168"/>
    </location>
    <ligand>
        <name>NADP(+)</name>
        <dbReference type="ChEBI" id="CHEBI:58349"/>
    </ligand>
</feature>
<feature type="binding site" evidence="1">
    <location>
        <position position="191"/>
    </location>
    <ligand>
        <name>NADP(+)</name>
        <dbReference type="ChEBI" id="CHEBI:58349"/>
    </ligand>
</feature>
<feature type="binding site" evidence="1">
    <location>
        <position position="232"/>
    </location>
    <ligand>
        <name>NADP(+)</name>
        <dbReference type="ChEBI" id="CHEBI:58349"/>
    </ligand>
</feature>
<name>FOLD_RHOP5</name>
<reference key="1">
    <citation type="submission" date="2006-09" db="EMBL/GenBank/DDBJ databases">
        <title>Complete sequence of Rhodopseudomonas palustris BisA53.</title>
        <authorList>
            <consortium name="US DOE Joint Genome Institute"/>
            <person name="Copeland A."/>
            <person name="Lucas S."/>
            <person name="Lapidus A."/>
            <person name="Barry K."/>
            <person name="Detter J.C."/>
            <person name="Glavina del Rio T."/>
            <person name="Hammon N."/>
            <person name="Israni S."/>
            <person name="Dalin E."/>
            <person name="Tice H."/>
            <person name="Pitluck S."/>
            <person name="Chain P."/>
            <person name="Malfatti S."/>
            <person name="Shin M."/>
            <person name="Vergez L."/>
            <person name="Schmutz J."/>
            <person name="Larimer F."/>
            <person name="Land M."/>
            <person name="Hauser L."/>
            <person name="Pelletier D.A."/>
            <person name="Kyrpides N."/>
            <person name="Kim E."/>
            <person name="Harwood C.S."/>
            <person name="Oda Y."/>
            <person name="Richardson P."/>
        </authorList>
    </citation>
    <scope>NUCLEOTIDE SEQUENCE [LARGE SCALE GENOMIC DNA]</scope>
    <source>
        <strain>BisA53</strain>
    </source>
</reference>
<protein>
    <recommendedName>
        <fullName evidence="1">Bifunctional protein FolD</fullName>
    </recommendedName>
    <domain>
        <recommendedName>
            <fullName evidence="1">Methylenetetrahydrofolate dehydrogenase</fullName>
            <ecNumber evidence="1">1.5.1.5</ecNumber>
        </recommendedName>
    </domain>
    <domain>
        <recommendedName>
            <fullName evidence="1">Methenyltetrahydrofolate cyclohydrolase</fullName>
            <ecNumber evidence="1">3.5.4.9</ecNumber>
        </recommendedName>
    </domain>
</protein>
<keyword id="KW-0028">Amino-acid biosynthesis</keyword>
<keyword id="KW-0368">Histidine biosynthesis</keyword>
<keyword id="KW-0378">Hydrolase</keyword>
<keyword id="KW-0486">Methionine biosynthesis</keyword>
<keyword id="KW-0511">Multifunctional enzyme</keyword>
<keyword id="KW-0521">NADP</keyword>
<keyword id="KW-0554">One-carbon metabolism</keyword>
<keyword id="KW-0560">Oxidoreductase</keyword>
<keyword id="KW-0658">Purine biosynthesis</keyword>
<comment type="function">
    <text evidence="1">Catalyzes the oxidation of 5,10-methylenetetrahydrofolate to 5,10-methenyltetrahydrofolate and then the hydrolysis of 5,10-methenyltetrahydrofolate to 10-formyltetrahydrofolate.</text>
</comment>
<comment type="catalytic activity">
    <reaction evidence="1">
        <text>(6R)-5,10-methylene-5,6,7,8-tetrahydrofolate + NADP(+) = (6R)-5,10-methenyltetrahydrofolate + NADPH</text>
        <dbReference type="Rhea" id="RHEA:22812"/>
        <dbReference type="ChEBI" id="CHEBI:15636"/>
        <dbReference type="ChEBI" id="CHEBI:57455"/>
        <dbReference type="ChEBI" id="CHEBI:57783"/>
        <dbReference type="ChEBI" id="CHEBI:58349"/>
        <dbReference type="EC" id="1.5.1.5"/>
    </reaction>
</comment>
<comment type="catalytic activity">
    <reaction evidence="1">
        <text>(6R)-5,10-methenyltetrahydrofolate + H2O = (6R)-10-formyltetrahydrofolate + H(+)</text>
        <dbReference type="Rhea" id="RHEA:23700"/>
        <dbReference type="ChEBI" id="CHEBI:15377"/>
        <dbReference type="ChEBI" id="CHEBI:15378"/>
        <dbReference type="ChEBI" id="CHEBI:57455"/>
        <dbReference type="ChEBI" id="CHEBI:195366"/>
        <dbReference type="EC" id="3.5.4.9"/>
    </reaction>
</comment>
<comment type="pathway">
    <text evidence="1">One-carbon metabolism; tetrahydrofolate interconversion.</text>
</comment>
<comment type="subunit">
    <text evidence="1">Homodimer.</text>
</comment>
<comment type="similarity">
    <text evidence="1">Belongs to the tetrahydrofolate dehydrogenase/cyclohydrolase family.</text>
</comment>
<accession>Q07VM6</accession>
<evidence type="ECO:0000255" key="1">
    <source>
        <dbReference type="HAMAP-Rule" id="MF_01576"/>
    </source>
</evidence>
<gene>
    <name evidence="1" type="primary">folD</name>
    <name type="ordered locus">RPE_0047</name>
</gene>
<sequence>MSARIIDGKVISAELRARVAAEVTRIKTDHGITPGLAVVLVGADPASEVYVRSKHKQTQEAGMASFEHRLPADVPQAELLALIAKLNADPTVHGILVQLPLPKGLDSNAVIDAIDPAKDVDGLNPVNAGRLASGLFALTPCTPLGCIIMAKQVHASLEGMNAIVVGRSNLVGKPLVQLLLNENATVTIAHSRSRDLPALCRQADLVFAAVGKPEMIRGDWIKPGATVIDVGINRTPSPDGGKDKLVGDVAFAEAKEVAGAITPVPGGVGLMTVACLLVNTVRAASAIHGLPKPAV</sequence>
<organism>
    <name type="scientific">Rhodopseudomonas palustris (strain BisA53)</name>
    <dbReference type="NCBI Taxonomy" id="316055"/>
    <lineage>
        <taxon>Bacteria</taxon>
        <taxon>Pseudomonadati</taxon>
        <taxon>Pseudomonadota</taxon>
        <taxon>Alphaproteobacteria</taxon>
        <taxon>Hyphomicrobiales</taxon>
        <taxon>Nitrobacteraceae</taxon>
        <taxon>Rhodopseudomonas</taxon>
    </lineage>
</organism>
<dbReference type="EC" id="1.5.1.5" evidence="1"/>
<dbReference type="EC" id="3.5.4.9" evidence="1"/>
<dbReference type="EMBL" id="CP000463">
    <property type="protein sequence ID" value="ABJ04008.1"/>
    <property type="molecule type" value="Genomic_DNA"/>
</dbReference>
<dbReference type="SMR" id="Q07VM6"/>
<dbReference type="STRING" id="316055.RPE_0047"/>
<dbReference type="KEGG" id="rpe:RPE_0047"/>
<dbReference type="eggNOG" id="COG0190">
    <property type="taxonomic scope" value="Bacteria"/>
</dbReference>
<dbReference type="HOGENOM" id="CLU_034045_2_1_5"/>
<dbReference type="OrthoDB" id="9803580at2"/>
<dbReference type="UniPathway" id="UPA00193"/>
<dbReference type="GO" id="GO:0005829">
    <property type="term" value="C:cytosol"/>
    <property type="evidence" value="ECO:0007669"/>
    <property type="project" value="TreeGrafter"/>
</dbReference>
<dbReference type="GO" id="GO:0004477">
    <property type="term" value="F:methenyltetrahydrofolate cyclohydrolase activity"/>
    <property type="evidence" value="ECO:0007669"/>
    <property type="project" value="UniProtKB-UniRule"/>
</dbReference>
<dbReference type="GO" id="GO:0004488">
    <property type="term" value="F:methylenetetrahydrofolate dehydrogenase (NADP+) activity"/>
    <property type="evidence" value="ECO:0007669"/>
    <property type="project" value="UniProtKB-UniRule"/>
</dbReference>
<dbReference type="GO" id="GO:0000105">
    <property type="term" value="P:L-histidine biosynthetic process"/>
    <property type="evidence" value="ECO:0007669"/>
    <property type="project" value="UniProtKB-KW"/>
</dbReference>
<dbReference type="GO" id="GO:0009086">
    <property type="term" value="P:methionine biosynthetic process"/>
    <property type="evidence" value="ECO:0007669"/>
    <property type="project" value="UniProtKB-KW"/>
</dbReference>
<dbReference type="GO" id="GO:0006164">
    <property type="term" value="P:purine nucleotide biosynthetic process"/>
    <property type="evidence" value="ECO:0007669"/>
    <property type="project" value="UniProtKB-KW"/>
</dbReference>
<dbReference type="GO" id="GO:0035999">
    <property type="term" value="P:tetrahydrofolate interconversion"/>
    <property type="evidence" value="ECO:0007669"/>
    <property type="project" value="UniProtKB-UniRule"/>
</dbReference>
<dbReference type="CDD" id="cd01080">
    <property type="entry name" value="NAD_bind_m-THF_DH_Cyclohyd"/>
    <property type="match status" value="1"/>
</dbReference>
<dbReference type="FunFam" id="3.40.50.720:FF:000006">
    <property type="entry name" value="Bifunctional protein FolD"/>
    <property type="match status" value="1"/>
</dbReference>
<dbReference type="FunFam" id="3.40.50.10860:FF:000005">
    <property type="entry name" value="C-1-tetrahydrofolate synthase, cytoplasmic, putative"/>
    <property type="match status" value="1"/>
</dbReference>
<dbReference type="Gene3D" id="3.40.50.10860">
    <property type="entry name" value="Leucine Dehydrogenase, chain A, domain 1"/>
    <property type="match status" value="1"/>
</dbReference>
<dbReference type="Gene3D" id="3.40.50.720">
    <property type="entry name" value="NAD(P)-binding Rossmann-like Domain"/>
    <property type="match status" value="1"/>
</dbReference>
<dbReference type="HAMAP" id="MF_01576">
    <property type="entry name" value="THF_DHG_CYH"/>
    <property type="match status" value="1"/>
</dbReference>
<dbReference type="InterPro" id="IPR046346">
    <property type="entry name" value="Aminoacid_DH-like_N_sf"/>
</dbReference>
<dbReference type="InterPro" id="IPR036291">
    <property type="entry name" value="NAD(P)-bd_dom_sf"/>
</dbReference>
<dbReference type="InterPro" id="IPR000672">
    <property type="entry name" value="THF_DH/CycHdrlase"/>
</dbReference>
<dbReference type="InterPro" id="IPR020630">
    <property type="entry name" value="THF_DH/CycHdrlase_cat_dom"/>
</dbReference>
<dbReference type="InterPro" id="IPR020867">
    <property type="entry name" value="THF_DH/CycHdrlase_CS"/>
</dbReference>
<dbReference type="InterPro" id="IPR020631">
    <property type="entry name" value="THF_DH/CycHdrlase_NAD-bd_dom"/>
</dbReference>
<dbReference type="NCBIfam" id="NF010783">
    <property type="entry name" value="PRK14186.1"/>
    <property type="match status" value="1"/>
</dbReference>
<dbReference type="NCBIfam" id="NF010785">
    <property type="entry name" value="PRK14188.1"/>
    <property type="match status" value="1"/>
</dbReference>
<dbReference type="PANTHER" id="PTHR48099:SF5">
    <property type="entry name" value="C-1-TETRAHYDROFOLATE SYNTHASE, CYTOPLASMIC"/>
    <property type="match status" value="1"/>
</dbReference>
<dbReference type="PANTHER" id="PTHR48099">
    <property type="entry name" value="C-1-TETRAHYDROFOLATE SYNTHASE, CYTOPLASMIC-RELATED"/>
    <property type="match status" value="1"/>
</dbReference>
<dbReference type="Pfam" id="PF00763">
    <property type="entry name" value="THF_DHG_CYH"/>
    <property type="match status" value="1"/>
</dbReference>
<dbReference type="Pfam" id="PF02882">
    <property type="entry name" value="THF_DHG_CYH_C"/>
    <property type="match status" value="1"/>
</dbReference>
<dbReference type="PRINTS" id="PR00085">
    <property type="entry name" value="THFDHDRGNASE"/>
</dbReference>
<dbReference type="SUPFAM" id="SSF53223">
    <property type="entry name" value="Aminoacid dehydrogenase-like, N-terminal domain"/>
    <property type="match status" value="1"/>
</dbReference>
<dbReference type="SUPFAM" id="SSF51735">
    <property type="entry name" value="NAD(P)-binding Rossmann-fold domains"/>
    <property type="match status" value="1"/>
</dbReference>
<dbReference type="PROSITE" id="PS00766">
    <property type="entry name" value="THF_DHG_CYH_1"/>
    <property type="match status" value="1"/>
</dbReference>
<proteinExistence type="inferred from homology"/>